<sequence length="61" mass="7300">MAKTSMVAKQQKKQKYAVREYTRCERCGRPHSVYRKFKLCRICFRELAYKGQIPGVRKASW</sequence>
<feature type="chain" id="PRO_1000087024" description="Small ribosomal subunit protein uS14">
    <location>
        <begin position="1"/>
        <end position="61"/>
    </location>
</feature>
<feature type="binding site" evidence="1">
    <location>
        <position position="24"/>
    </location>
    <ligand>
        <name>Zn(2+)</name>
        <dbReference type="ChEBI" id="CHEBI:29105"/>
    </ligand>
</feature>
<feature type="binding site" evidence="1">
    <location>
        <position position="27"/>
    </location>
    <ligand>
        <name>Zn(2+)</name>
        <dbReference type="ChEBI" id="CHEBI:29105"/>
    </ligand>
</feature>
<feature type="binding site" evidence="1">
    <location>
        <position position="40"/>
    </location>
    <ligand>
        <name>Zn(2+)</name>
        <dbReference type="ChEBI" id="CHEBI:29105"/>
    </ligand>
</feature>
<feature type="binding site" evidence="1">
    <location>
        <position position="43"/>
    </location>
    <ligand>
        <name>Zn(2+)</name>
        <dbReference type="ChEBI" id="CHEBI:29105"/>
    </ligand>
</feature>
<proteinExistence type="inferred from homology"/>
<protein>
    <recommendedName>
        <fullName evidence="1">Small ribosomal subunit protein uS14</fullName>
    </recommendedName>
    <alternativeName>
        <fullName evidence="2">30S ribosomal protein S14 type Z</fullName>
    </alternativeName>
</protein>
<evidence type="ECO:0000255" key="1">
    <source>
        <dbReference type="HAMAP-Rule" id="MF_01364"/>
    </source>
</evidence>
<evidence type="ECO:0000305" key="2"/>
<name>RS14Z_STAAT</name>
<keyword id="KW-0479">Metal-binding</keyword>
<keyword id="KW-0687">Ribonucleoprotein</keyword>
<keyword id="KW-0689">Ribosomal protein</keyword>
<keyword id="KW-0694">RNA-binding</keyword>
<keyword id="KW-0699">rRNA-binding</keyword>
<keyword id="KW-0862">Zinc</keyword>
<organism>
    <name type="scientific">Staphylococcus aureus (strain USA300 / TCH1516)</name>
    <dbReference type="NCBI Taxonomy" id="451516"/>
    <lineage>
        <taxon>Bacteria</taxon>
        <taxon>Bacillati</taxon>
        <taxon>Bacillota</taxon>
        <taxon>Bacilli</taxon>
        <taxon>Bacillales</taxon>
        <taxon>Staphylococcaceae</taxon>
        <taxon>Staphylococcus</taxon>
    </lineage>
</organism>
<reference key="1">
    <citation type="journal article" date="2007" name="BMC Microbiol.">
        <title>Subtle genetic changes enhance virulence of methicillin resistant and sensitive Staphylococcus aureus.</title>
        <authorList>
            <person name="Highlander S.K."/>
            <person name="Hulten K.G."/>
            <person name="Qin X."/>
            <person name="Jiang H."/>
            <person name="Yerrapragada S."/>
            <person name="Mason E.O. Jr."/>
            <person name="Shang Y."/>
            <person name="Williams T.M."/>
            <person name="Fortunov R.M."/>
            <person name="Liu Y."/>
            <person name="Igboeli O."/>
            <person name="Petrosino J."/>
            <person name="Tirumalai M."/>
            <person name="Uzman A."/>
            <person name="Fox G.E."/>
            <person name="Cardenas A.M."/>
            <person name="Muzny D.M."/>
            <person name="Hemphill L."/>
            <person name="Ding Y."/>
            <person name="Dugan S."/>
            <person name="Blyth P.R."/>
            <person name="Buhay C.J."/>
            <person name="Dinh H.H."/>
            <person name="Hawes A.C."/>
            <person name="Holder M."/>
            <person name="Kovar C.L."/>
            <person name="Lee S.L."/>
            <person name="Liu W."/>
            <person name="Nazareth L.V."/>
            <person name="Wang Q."/>
            <person name="Zhou J."/>
            <person name="Kaplan S.L."/>
            <person name="Weinstock G.M."/>
        </authorList>
    </citation>
    <scope>NUCLEOTIDE SEQUENCE [LARGE SCALE GENOMIC DNA]</scope>
    <source>
        <strain>USA300 / TCH1516</strain>
    </source>
</reference>
<dbReference type="EMBL" id="CP000730">
    <property type="protein sequence ID" value="ABX30221.1"/>
    <property type="molecule type" value="Genomic_DNA"/>
</dbReference>
<dbReference type="RefSeq" id="WP_001140799.1">
    <property type="nucleotide sequence ID" value="NC_010079.1"/>
</dbReference>
<dbReference type="SMR" id="A8Z344"/>
<dbReference type="KEGG" id="sax:USA300HOU_2228"/>
<dbReference type="HOGENOM" id="CLU_139869_3_0_9"/>
<dbReference type="GO" id="GO:0015935">
    <property type="term" value="C:small ribosomal subunit"/>
    <property type="evidence" value="ECO:0007669"/>
    <property type="project" value="TreeGrafter"/>
</dbReference>
<dbReference type="GO" id="GO:0019843">
    <property type="term" value="F:rRNA binding"/>
    <property type="evidence" value="ECO:0007669"/>
    <property type="project" value="UniProtKB-UniRule"/>
</dbReference>
<dbReference type="GO" id="GO:0003735">
    <property type="term" value="F:structural constituent of ribosome"/>
    <property type="evidence" value="ECO:0007669"/>
    <property type="project" value="InterPro"/>
</dbReference>
<dbReference type="GO" id="GO:0008270">
    <property type="term" value="F:zinc ion binding"/>
    <property type="evidence" value="ECO:0007669"/>
    <property type="project" value="UniProtKB-UniRule"/>
</dbReference>
<dbReference type="GO" id="GO:0006412">
    <property type="term" value="P:translation"/>
    <property type="evidence" value="ECO:0007669"/>
    <property type="project" value="UniProtKB-UniRule"/>
</dbReference>
<dbReference type="FunFam" id="4.10.830.10:FF:000001">
    <property type="entry name" value="30S ribosomal protein S14 type Z"/>
    <property type="match status" value="1"/>
</dbReference>
<dbReference type="Gene3D" id="4.10.830.10">
    <property type="entry name" value="30s Ribosomal Protein S14, Chain N"/>
    <property type="match status" value="1"/>
</dbReference>
<dbReference type="HAMAP" id="MF_01364_B">
    <property type="entry name" value="Ribosomal_uS14_2_B"/>
    <property type="match status" value="1"/>
</dbReference>
<dbReference type="InterPro" id="IPR001209">
    <property type="entry name" value="Ribosomal_uS14"/>
</dbReference>
<dbReference type="InterPro" id="IPR023053">
    <property type="entry name" value="Ribosomal_uS14_bact"/>
</dbReference>
<dbReference type="InterPro" id="IPR018271">
    <property type="entry name" value="Ribosomal_uS14_CS"/>
</dbReference>
<dbReference type="InterPro" id="IPR043140">
    <property type="entry name" value="Ribosomal_uS14_sf"/>
</dbReference>
<dbReference type="NCBIfam" id="NF005974">
    <property type="entry name" value="PRK08061.1"/>
    <property type="match status" value="1"/>
</dbReference>
<dbReference type="PANTHER" id="PTHR19836">
    <property type="entry name" value="30S RIBOSOMAL PROTEIN S14"/>
    <property type="match status" value="1"/>
</dbReference>
<dbReference type="PANTHER" id="PTHR19836:SF26">
    <property type="entry name" value="SMALL RIBOSOMAL SUBUNIT PROTEIN US14B"/>
    <property type="match status" value="1"/>
</dbReference>
<dbReference type="Pfam" id="PF00253">
    <property type="entry name" value="Ribosomal_S14"/>
    <property type="match status" value="1"/>
</dbReference>
<dbReference type="SUPFAM" id="SSF57716">
    <property type="entry name" value="Glucocorticoid receptor-like (DNA-binding domain)"/>
    <property type="match status" value="1"/>
</dbReference>
<dbReference type="PROSITE" id="PS00527">
    <property type="entry name" value="RIBOSOMAL_S14"/>
    <property type="match status" value="1"/>
</dbReference>
<comment type="function">
    <text evidence="1">Binds 16S rRNA, required for the assembly of 30S particles and may also be responsible for determining the conformation of the 16S rRNA at the A site.</text>
</comment>
<comment type="cofactor">
    <cofactor evidence="1">
        <name>Zn(2+)</name>
        <dbReference type="ChEBI" id="CHEBI:29105"/>
    </cofactor>
    <text evidence="1">Binds 1 zinc ion per subunit.</text>
</comment>
<comment type="subunit">
    <text evidence="1">Part of the 30S ribosomal subunit. Contacts proteins S3 and S10.</text>
</comment>
<comment type="similarity">
    <text evidence="1">Belongs to the universal ribosomal protein uS14 family. Zinc-binding uS14 subfamily.</text>
</comment>
<gene>
    <name evidence="1" type="primary">rpsZ</name>
    <name evidence="1" type="synonym">rpsN</name>
    <name type="ordered locus">USA300HOU_2228</name>
</gene>
<accession>A8Z344</accession>